<dbReference type="EC" id="4.6.1.12" evidence="1"/>
<dbReference type="EMBL" id="BA000037">
    <property type="protein sequence ID" value="BAC95578.1"/>
    <property type="molecule type" value="Genomic_DNA"/>
</dbReference>
<dbReference type="RefSeq" id="WP_011151152.1">
    <property type="nucleotide sequence ID" value="NC_005139.1"/>
</dbReference>
<dbReference type="SMR" id="Q7MHQ5"/>
<dbReference type="STRING" id="672.VV93_v1c25240"/>
<dbReference type="KEGG" id="vvy:VV2814"/>
<dbReference type="eggNOG" id="COG0245">
    <property type="taxonomic scope" value="Bacteria"/>
</dbReference>
<dbReference type="HOGENOM" id="CLU_084630_2_0_6"/>
<dbReference type="UniPathway" id="UPA00056">
    <property type="reaction ID" value="UER00095"/>
</dbReference>
<dbReference type="Proteomes" id="UP000002675">
    <property type="component" value="Chromosome I"/>
</dbReference>
<dbReference type="GO" id="GO:0008685">
    <property type="term" value="F:2-C-methyl-D-erythritol 2,4-cyclodiphosphate synthase activity"/>
    <property type="evidence" value="ECO:0007669"/>
    <property type="project" value="UniProtKB-UniRule"/>
</dbReference>
<dbReference type="GO" id="GO:0046872">
    <property type="term" value="F:metal ion binding"/>
    <property type="evidence" value="ECO:0007669"/>
    <property type="project" value="UniProtKB-KW"/>
</dbReference>
<dbReference type="GO" id="GO:0019288">
    <property type="term" value="P:isopentenyl diphosphate biosynthetic process, methylerythritol 4-phosphate pathway"/>
    <property type="evidence" value="ECO:0007669"/>
    <property type="project" value="UniProtKB-UniRule"/>
</dbReference>
<dbReference type="GO" id="GO:0016114">
    <property type="term" value="P:terpenoid biosynthetic process"/>
    <property type="evidence" value="ECO:0007669"/>
    <property type="project" value="InterPro"/>
</dbReference>
<dbReference type="CDD" id="cd00554">
    <property type="entry name" value="MECDP_synthase"/>
    <property type="match status" value="1"/>
</dbReference>
<dbReference type="FunFam" id="3.30.1330.50:FF:000001">
    <property type="entry name" value="2-C-methyl-D-erythritol 2,4-cyclodiphosphate synthase"/>
    <property type="match status" value="1"/>
</dbReference>
<dbReference type="Gene3D" id="3.30.1330.50">
    <property type="entry name" value="2-C-methyl-D-erythritol 2,4-cyclodiphosphate synthase"/>
    <property type="match status" value="1"/>
</dbReference>
<dbReference type="HAMAP" id="MF_00107">
    <property type="entry name" value="IspF"/>
    <property type="match status" value="1"/>
</dbReference>
<dbReference type="InterPro" id="IPR003526">
    <property type="entry name" value="MECDP_synthase"/>
</dbReference>
<dbReference type="InterPro" id="IPR020555">
    <property type="entry name" value="MECDP_synthase_CS"/>
</dbReference>
<dbReference type="InterPro" id="IPR036571">
    <property type="entry name" value="MECDP_synthase_sf"/>
</dbReference>
<dbReference type="NCBIfam" id="TIGR00151">
    <property type="entry name" value="ispF"/>
    <property type="match status" value="1"/>
</dbReference>
<dbReference type="PANTHER" id="PTHR43181">
    <property type="entry name" value="2-C-METHYL-D-ERYTHRITOL 2,4-CYCLODIPHOSPHATE SYNTHASE, CHLOROPLASTIC"/>
    <property type="match status" value="1"/>
</dbReference>
<dbReference type="PANTHER" id="PTHR43181:SF1">
    <property type="entry name" value="2-C-METHYL-D-ERYTHRITOL 2,4-CYCLODIPHOSPHATE SYNTHASE, CHLOROPLASTIC"/>
    <property type="match status" value="1"/>
</dbReference>
<dbReference type="Pfam" id="PF02542">
    <property type="entry name" value="YgbB"/>
    <property type="match status" value="1"/>
</dbReference>
<dbReference type="SUPFAM" id="SSF69765">
    <property type="entry name" value="IpsF-like"/>
    <property type="match status" value="1"/>
</dbReference>
<dbReference type="PROSITE" id="PS01350">
    <property type="entry name" value="ISPF"/>
    <property type="match status" value="1"/>
</dbReference>
<organism>
    <name type="scientific">Vibrio vulnificus (strain YJ016)</name>
    <dbReference type="NCBI Taxonomy" id="196600"/>
    <lineage>
        <taxon>Bacteria</taxon>
        <taxon>Pseudomonadati</taxon>
        <taxon>Pseudomonadota</taxon>
        <taxon>Gammaproteobacteria</taxon>
        <taxon>Vibrionales</taxon>
        <taxon>Vibrionaceae</taxon>
        <taxon>Vibrio</taxon>
    </lineage>
</organism>
<reference key="1">
    <citation type="journal article" date="2003" name="Genome Res.">
        <title>Comparative genome analysis of Vibrio vulnificus, a marine pathogen.</title>
        <authorList>
            <person name="Chen C.-Y."/>
            <person name="Wu K.-M."/>
            <person name="Chang Y.-C."/>
            <person name="Chang C.-H."/>
            <person name="Tsai H.-C."/>
            <person name="Liao T.-L."/>
            <person name="Liu Y.-M."/>
            <person name="Chen H.-J."/>
            <person name="Shen A.B.-T."/>
            <person name="Li J.-C."/>
            <person name="Su T.-L."/>
            <person name="Shao C.-P."/>
            <person name="Lee C.-T."/>
            <person name="Hor L.-I."/>
            <person name="Tsai S.-F."/>
        </authorList>
    </citation>
    <scope>NUCLEOTIDE SEQUENCE [LARGE SCALE GENOMIC DNA]</scope>
    <source>
        <strain>YJ016</strain>
    </source>
</reference>
<keyword id="KW-0414">Isoprene biosynthesis</keyword>
<keyword id="KW-0456">Lyase</keyword>
<keyword id="KW-0479">Metal-binding</keyword>
<evidence type="ECO:0000255" key="1">
    <source>
        <dbReference type="HAMAP-Rule" id="MF_00107"/>
    </source>
</evidence>
<feature type="chain" id="PRO_0000189517" description="2-C-methyl-D-erythritol 2,4-cyclodiphosphate synthase">
    <location>
        <begin position="1"/>
        <end position="158"/>
    </location>
</feature>
<feature type="binding site" evidence="1">
    <location>
        <begin position="9"/>
        <end position="11"/>
    </location>
    <ligand>
        <name>4-CDP-2-C-methyl-D-erythritol 2-phosphate</name>
        <dbReference type="ChEBI" id="CHEBI:57919"/>
    </ligand>
</feature>
<feature type="binding site" evidence="1">
    <location>
        <position position="9"/>
    </location>
    <ligand>
        <name>a divalent metal cation</name>
        <dbReference type="ChEBI" id="CHEBI:60240"/>
    </ligand>
</feature>
<feature type="binding site" evidence="1">
    <location>
        <position position="11"/>
    </location>
    <ligand>
        <name>a divalent metal cation</name>
        <dbReference type="ChEBI" id="CHEBI:60240"/>
    </ligand>
</feature>
<feature type="binding site" evidence="1">
    <location>
        <begin position="35"/>
        <end position="36"/>
    </location>
    <ligand>
        <name>4-CDP-2-C-methyl-D-erythritol 2-phosphate</name>
        <dbReference type="ChEBI" id="CHEBI:57919"/>
    </ligand>
</feature>
<feature type="binding site" evidence="1">
    <location>
        <position position="43"/>
    </location>
    <ligand>
        <name>a divalent metal cation</name>
        <dbReference type="ChEBI" id="CHEBI:60240"/>
    </ligand>
</feature>
<feature type="binding site" evidence="1">
    <location>
        <begin position="57"/>
        <end position="59"/>
    </location>
    <ligand>
        <name>4-CDP-2-C-methyl-D-erythritol 2-phosphate</name>
        <dbReference type="ChEBI" id="CHEBI:57919"/>
    </ligand>
</feature>
<feature type="binding site" evidence="1">
    <location>
        <begin position="62"/>
        <end position="66"/>
    </location>
    <ligand>
        <name>4-CDP-2-C-methyl-D-erythritol 2-phosphate</name>
        <dbReference type="ChEBI" id="CHEBI:57919"/>
    </ligand>
</feature>
<feature type="binding site" evidence="1">
    <location>
        <begin position="101"/>
        <end position="107"/>
    </location>
    <ligand>
        <name>4-CDP-2-C-methyl-D-erythritol 2-phosphate</name>
        <dbReference type="ChEBI" id="CHEBI:57919"/>
    </ligand>
</feature>
<feature type="binding site" evidence="1">
    <location>
        <begin position="133"/>
        <end position="136"/>
    </location>
    <ligand>
        <name>4-CDP-2-C-methyl-D-erythritol 2-phosphate</name>
        <dbReference type="ChEBI" id="CHEBI:57919"/>
    </ligand>
</feature>
<feature type="binding site" evidence="1">
    <location>
        <position position="140"/>
    </location>
    <ligand>
        <name>4-CDP-2-C-methyl-D-erythritol 2-phosphate</name>
        <dbReference type="ChEBI" id="CHEBI:57919"/>
    </ligand>
</feature>
<feature type="binding site" evidence="1">
    <location>
        <position position="143"/>
    </location>
    <ligand>
        <name>4-CDP-2-C-methyl-D-erythritol 2-phosphate</name>
        <dbReference type="ChEBI" id="CHEBI:57919"/>
    </ligand>
</feature>
<feature type="site" description="Transition state stabilizer" evidence="1">
    <location>
        <position position="35"/>
    </location>
</feature>
<feature type="site" description="Transition state stabilizer" evidence="1">
    <location>
        <position position="134"/>
    </location>
</feature>
<name>ISPF_VIBVY</name>
<accession>Q7MHQ5</accession>
<comment type="function">
    <text evidence="1">Involved in the biosynthesis of isopentenyl diphosphate (IPP) and dimethylallyl diphosphate (DMAPP), two major building blocks of isoprenoid compounds. Catalyzes the conversion of 4-diphosphocytidyl-2-C-methyl-D-erythritol 2-phosphate (CDP-ME2P) to 2-C-methyl-D-erythritol 2,4-cyclodiphosphate (ME-CPP) with a corresponding release of cytidine 5-monophosphate (CMP).</text>
</comment>
<comment type="catalytic activity">
    <reaction evidence="1">
        <text>4-CDP-2-C-methyl-D-erythritol 2-phosphate = 2-C-methyl-D-erythritol 2,4-cyclic diphosphate + CMP</text>
        <dbReference type="Rhea" id="RHEA:23864"/>
        <dbReference type="ChEBI" id="CHEBI:57919"/>
        <dbReference type="ChEBI" id="CHEBI:58483"/>
        <dbReference type="ChEBI" id="CHEBI:60377"/>
        <dbReference type="EC" id="4.6.1.12"/>
    </reaction>
</comment>
<comment type="cofactor">
    <cofactor evidence="1">
        <name>a divalent metal cation</name>
        <dbReference type="ChEBI" id="CHEBI:60240"/>
    </cofactor>
    <text evidence="1">Binds 1 divalent metal cation per subunit.</text>
</comment>
<comment type="pathway">
    <text evidence="1">Isoprenoid biosynthesis; isopentenyl diphosphate biosynthesis via DXP pathway; isopentenyl diphosphate from 1-deoxy-D-xylulose 5-phosphate: step 4/6.</text>
</comment>
<comment type="subunit">
    <text evidence="1">Homotrimer.</text>
</comment>
<comment type="similarity">
    <text evidence="1">Belongs to the IspF family.</text>
</comment>
<proteinExistence type="inferred from homology"/>
<sequence length="158" mass="17056">MIRIGHGFDVHKFGGEGPVIIGGVAVPYEQGLIAHSDGDVALHALSDALLGAIAAGDIGRHFPDTDDKWKGADSRELLKDVYRRVKEQGYKLGNADVTIIAQAPKMAPYIDAMREAIAHDLETDIRNINVKATTTERLGFTGRKEGIATEAVVLLIKQ</sequence>
<protein>
    <recommendedName>
        <fullName evidence="1">2-C-methyl-D-erythritol 2,4-cyclodiphosphate synthase</fullName>
        <shortName evidence="1">MECDP-synthase</shortName>
        <shortName evidence="1">MECPP-synthase</shortName>
        <shortName evidence="1">MECPS</shortName>
        <ecNumber evidence="1">4.6.1.12</ecNumber>
    </recommendedName>
</protein>
<gene>
    <name evidence="1" type="primary">ispF</name>
    <name type="ordered locus">VV2814</name>
</gene>